<comment type="function">
    <text evidence="1">Accessory subunit of the mitochondrial membrane respiratory chain NADH dehydrogenase (Complex I), that is believed not to be involved in catalysis. Complex I functions in the transfer of electrons from NADH to the respiratory chain. The immediate electron acceptor for the enzyme is believed to be ubiquinone (By similarity).</text>
</comment>
<comment type="subunit">
    <text>Complex I is composed of at least 49 different subunits.</text>
</comment>
<comment type="subcellular location">
    <subcellularLocation>
        <location evidence="1">Mitochondrion inner membrane</location>
        <topology evidence="1">Single-pass membrane protein</topology>
        <orientation evidence="1">Matrix side</orientation>
    </subcellularLocation>
</comment>
<comment type="similarity">
    <text evidence="3">Belongs to the complex I NDUFB8 subunit family.</text>
</comment>
<organism>
    <name type="scientific">Arabidopsis thaliana</name>
    <name type="common">Mouse-ear cress</name>
    <dbReference type="NCBI Taxonomy" id="3702"/>
    <lineage>
        <taxon>Eukaryota</taxon>
        <taxon>Viridiplantae</taxon>
        <taxon>Streptophyta</taxon>
        <taxon>Embryophyta</taxon>
        <taxon>Tracheophyta</taxon>
        <taxon>Spermatophyta</taxon>
        <taxon>Magnoliopsida</taxon>
        <taxon>eudicotyledons</taxon>
        <taxon>Gunneridae</taxon>
        <taxon>Pentapetalae</taxon>
        <taxon>rosids</taxon>
        <taxon>malvids</taxon>
        <taxon>Brassicales</taxon>
        <taxon>Brassicaceae</taxon>
        <taxon>Camelineae</taxon>
        <taxon>Arabidopsis</taxon>
    </lineage>
</organism>
<dbReference type="EMBL" id="AB025628">
    <property type="protein sequence ID" value="BAB09083.1"/>
    <property type="molecule type" value="Genomic_DNA"/>
</dbReference>
<dbReference type="EMBL" id="CP002688">
    <property type="protein sequence ID" value="AED95533.1"/>
    <property type="molecule type" value="Genomic_DNA"/>
</dbReference>
<dbReference type="EMBL" id="AF462836">
    <property type="protein sequence ID" value="AAL58924.1"/>
    <property type="molecule type" value="mRNA"/>
</dbReference>
<dbReference type="EMBL" id="AY097354">
    <property type="protein sequence ID" value="AAM19870.1"/>
    <property type="molecule type" value="mRNA"/>
</dbReference>
<dbReference type="EMBL" id="AY084983">
    <property type="protein sequence ID" value="AAM61542.1"/>
    <property type="molecule type" value="mRNA"/>
</dbReference>
<dbReference type="RefSeq" id="NP_568684.1">
    <property type="nucleotide sequence ID" value="NM_124130.5"/>
</dbReference>
<dbReference type="PDB" id="7AQW">
    <property type="method" value="EM"/>
    <property type="resolution" value="3.17 A"/>
    <property type="chains" value="l=1-125"/>
</dbReference>
<dbReference type="PDB" id="7AR7">
    <property type="method" value="EM"/>
    <property type="resolution" value="3.72 A"/>
    <property type="chains" value="l=76-121"/>
</dbReference>
<dbReference type="PDB" id="7AR8">
    <property type="method" value="EM"/>
    <property type="resolution" value="3.53 A"/>
    <property type="chains" value="l=1-125"/>
</dbReference>
<dbReference type="PDB" id="7ARB">
    <property type="method" value="EM"/>
    <property type="resolution" value="3.41 A"/>
    <property type="chains" value="l=1-125"/>
</dbReference>
<dbReference type="PDB" id="8BEH">
    <property type="method" value="EM"/>
    <property type="resolution" value="2.29 A"/>
    <property type="chains" value="l=1-125"/>
</dbReference>
<dbReference type="PDB" id="8BPX">
    <property type="method" value="EM"/>
    <property type="resolution" value="2.09 A"/>
    <property type="chains" value="l=1-125"/>
</dbReference>
<dbReference type="PDB" id="8BQ5">
    <property type="method" value="EM"/>
    <property type="resolution" value="2.73 A"/>
    <property type="chains" value="l=1-125"/>
</dbReference>
<dbReference type="PDB" id="8BQ6">
    <property type="method" value="EM"/>
    <property type="resolution" value="2.80 A"/>
    <property type="chains" value="l=1-125"/>
</dbReference>
<dbReference type="PDBsum" id="7AQW"/>
<dbReference type="PDBsum" id="7AR7"/>
<dbReference type="PDBsum" id="7AR8"/>
<dbReference type="PDBsum" id="7ARB"/>
<dbReference type="PDBsum" id="8BEH"/>
<dbReference type="PDBsum" id="8BPX"/>
<dbReference type="PDBsum" id="8BQ5"/>
<dbReference type="PDBsum" id="8BQ6"/>
<dbReference type="EMDB" id="EMD-11874"/>
<dbReference type="EMDB" id="EMD-11875"/>
<dbReference type="EMDB" id="EMD-11876"/>
<dbReference type="EMDB" id="EMD-11878"/>
<dbReference type="EMDB" id="EMD-16003"/>
<dbReference type="EMDB" id="EMD-16168"/>
<dbReference type="EMDB" id="EMD-16171"/>
<dbReference type="EMDB" id="EMD-16172"/>
<dbReference type="SMR" id="Q9FGK0"/>
<dbReference type="BioGRID" id="20055">
    <property type="interactions" value="5"/>
</dbReference>
<dbReference type="FunCoup" id="Q9FGK0">
    <property type="interactions" value="464"/>
</dbReference>
<dbReference type="IntAct" id="Q9FGK0">
    <property type="interactions" value="7"/>
</dbReference>
<dbReference type="STRING" id="3702.Q9FGK0"/>
<dbReference type="iPTMnet" id="Q9FGK0"/>
<dbReference type="PaxDb" id="3702-AT5G47570.1"/>
<dbReference type="ProteomicsDB" id="236820"/>
<dbReference type="EnsemblPlants" id="AT5G47570.1">
    <property type="protein sequence ID" value="AT5G47570.1"/>
    <property type="gene ID" value="AT5G47570"/>
</dbReference>
<dbReference type="GeneID" id="834807"/>
<dbReference type="Gramene" id="AT5G47570.1">
    <property type="protein sequence ID" value="AT5G47570.1"/>
    <property type="gene ID" value="AT5G47570"/>
</dbReference>
<dbReference type="KEGG" id="ath:AT5G47570"/>
<dbReference type="Araport" id="AT5G47570"/>
<dbReference type="TAIR" id="AT5G47570"/>
<dbReference type="eggNOG" id="ENOG502RZB4">
    <property type="taxonomic scope" value="Eukaryota"/>
</dbReference>
<dbReference type="HOGENOM" id="CLU_151534_0_0_1"/>
<dbReference type="InParanoid" id="Q9FGK0"/>
<dbReference type="OMA" id="SFPEPCI"/>
<dbReference type="OrthoDB" id="2014058at2759"/>
<dbReference type="PhylomeDB" id="Q9FGK0"/>
<dbReference type="PRO" id="PR:Q9FGK0"/>
<dbReference type="Proteomes" id="UP000006548">
    <property type="component" value="Chromosome 5"/>
</dbReference>
<dbReference type="ExpressionAtlas" id="Q9FGK0">
    <property type="expression patterns" value="baseline and differential"/>
</dbReference>
<dbReference type="GO" id="GO:0005743">
    <property type="term" value="C:mitochondrial inner membrane"/>
    <property type="evidence" value="ECO:0007669"/>
    <property type="project" value="UniProtKB-SubCell"/>
</dbReference>
<dbReference type="InterPro" id="IPR038863">
    <property type="entry name" value="Put_Complex_I_su8"/>
</dbReference>
<dbReference type="PANTHER" id="PTHR36401">
    <property type="entry name" value="NADH DEHYDROGENASE [UBIQUINONE] 1 BETA SUBCOMPLEX SUBUNIT 8, MITOCHONDRIAL"/>
    <property type="match status" value="1"/>
</dbReference>
<dbReference type="PANTHER" id="PTHR36401:SF1">
    <property type="entry name" value="NADH DEHYDROGENASE [UBIQUINONE] 1 BETA SUBCOMPLEX SUBUNIT 8, MITOCHONDRIAL"/>
    <property type="match status" value="1"/>
</dbReference>
<name>NDUB8_ARATH</name>
<accession>Q9FGK0</accession>
<protein>
    <recommendedName>
        <fullName>NADH dehydrogenase [ubiquinone] 1 beta subcomplex subunit 8, mitochondrial</fullName>
    </recommendedName>
</protein>
<sequence>MAGRLSGVASRIMGGNGVVARSVGSSLRQRAGMGLPVGKHIVPDKPLSVNDELMWDNGTAFPEPCIDRIADTVGKYEALAWLSGGLGFFVGLGLLAVLNDKASKVPFTPRVYPYDNLRVELGGEP</sequence>
<proteinExistence type="evidence at protein level"/>
<keyword id="KW-0002">3D-structure</keyword>
<keyword id="KW-0249">Electron transport</keyword>
<keyword id="KW-0472">Membrane</keyword>
<keyword id="KW-0496">Mitochondrion</keyword>
<keyword id="KW-0999">Mitochondrion inner membrane</keyword>
<keyword id="KW-1185">Reference proteome</keyword>
<keyword id="KW-0679">Respiratory chain</keyword>
<keyword id="KW-0809">Transit peptide</keyword>
<keyword id="KW-0812">Transmembrane</keyword>
<keyword id="KW-1133">Transmembrane helix</keyword>
<keyword id="KW-0813">Transport</keyword>
<reference key="1">
    <citation type="submission" date="1999-04" db="EMBL/GenBank/DDBJ databases">
        <title>Structural analysis of Arabidopsis thaliana chromosome 5. XI.</title>
        <authorList>
            <person name="Kaneko T."/>
            <person name="Katoh T."/>
            <person name="Asamizu E."/>
            <person name="Sato S."/>
            <person name="Nakamura Y."/>
            <person name="Kotani H."/>
            <person name="Tabata S."/>
        </authorList>
    </citation>
    <scope>NUCLEOTIDE SEQUENCE [LARGE SCALE GENOMIC DNA]</scope>
    <source>
        <strain>cv. Columbia</strain>
    </source>
</reference>
<reference key="2">
    <citation type="journal article" date="2017" name="Plant J.">
        <title>Araport11: a complete reannotation of the Arabidopsis thaliana reference genome.</title>
        <authorList>
            <person name="Cheng C.Y."/>
            <person name="Krishnakumar V."/>
            <person name="Chan A.P."/>
            <person name="Thibaud-Nissen F."/>
            <person name="Schobel S."/>
            <person name="Town C.D."/>
        </authorList>
    </citation>
    <scope>GENOME REANNOTATION</scope>
    <source>
        <strain>cv. Columbia</strain>
    </source>
</reference>
<reference key="3">
    <citation type="journal article" date="2003" name="Science">
        <title>Empirical analysis of transcriptional activity in the Arabidopsis genome.</title>
        <authorList>
            <person name="Yamada K."/>
            <person name="Lim J."/>
            <person name="Dale J.M."/>
            <person name="Chen H."/>
            <person name="Shinn P."/>
            <person name="Palm C.J."/>
            <person name="Southwick A.M."/>
            <person name="Wu H.C."/>
            <person name="Kim C.J."/>
            <person name="Nguyen M."/>
            <person name="Pham P.K."/>
            <person name="Cheuk R.F."/>
            <person name="Karlin-Newmann G."/>
            <person name="Liu S.X."/>
            <person name="Lam B."/>
            <person name="Sakano H."/>
            <person name="Wu T."/>
            <person name="Yu G."/>
            <person name="Miranda M."/>
            <person name="Quach H.L."/>
            <person name="Tripp M."/>
            <person name="Chang C.H."/>
            <person name="Lee J.M."/>
            <person name="Toriumi M.J."/>
            <person name="Chan M.M."/>
            <person name="Tang C.C."/>
            <person name="Onodera C.S."/>
            <person name="Deng J.M."/>
            <person name="Akiyama K."/>
            <person name="Ansari Y."/>
            <person name="Arakawa T."/>
            <person name="Banh J."/>
            <person name="Banno F."/>
            <person name="Bowser L."/>
            <person name="Brooks S.Y."/>
            <person name="Carninci P."/>
            <person name="Chao Q."/>
            <person name="Choy N."/>
            <person name="Enju A."/>
            <person name="Goldsmith A.D."/>
            <person name="Gurjal M."/>
            <person name="Hansen N.F."/>
            <person name="Hayashizaki Y."/>
            <person name="Johnson-Hopson C."/>
            <person name="Hsuan V.W."/>
            <person name="Iida K."/>
            <person name="Karnes M."/>
            <person name="Khan S."/>
            <person name="Koesema E."/>
            <person name="Ishida J."/>
            <person name="Jiang P.X."/>
            <person name="Jones T."/>
            <person name="Kawai J."/>
            <person name="Kamiya A."/>
            <person name="Meyers C."/>
            <person name="Nakajima M."/>
            <person name="Narusaka M."/>
            <person name="Seki M."/>
            <person name="Sakurai T."/>
            <person name="Satou M."/>
            <person name="Tamse R."/>
            <person name="Vaysberg M."/>
            <person name="Wallender E.K."/>
            <person name="Wong C."/>
            <person name="Yamamura Y."/>
            <person name="Yuan S."/>
            <person name="Shinozaki K."/>
            <person name="Davis R.W."/>
            <person name="Theologis A."/>
            <person name="Ecker J.R."/>
        </authorList>
    </citation>
    <scope>NUCLEOTIDE SEQUENCE [LARGE SCALE MRNA]</scope>
    <source>
        <strain>cv. Columbia</strain>
    </source>
</reference>
<reference key="4">
    <citation type="submission" date="2002-03" db="EMBL/GenBank/DDBJ databases">
        <title>Full-length cDNA from Arabidopsis thaliana.</title>
        <authorList>
            <person name="Brover V.V."/>
            <person name="Troukhan M.E."/>
            <person name="Alexandrov N.A."/>
            <person name="Lu Y.-P."/>
            <person name="Flavell R.B."/>
            <person name="Feldmann K.A."/>
        </authorList>
    </citation>
    <scope>NUCLEOTIDE SEQUENCE [LARGE SCALE MRNA]</scope>
</reference>
<evidence type="ECO:0000250" key="1"/>
<evidence type="ECO:0000255" key="2"/>
<evidence type="ECO:0000305" key="3"/>
<evidence type="ECO:0007829" key="4">
    <source>
        <dbReference type="PDB" id="7AQW"/>
    </source>
</evidence>
<evidence type="ECO:0007829" key="5">
    <source>
        <dbReference type="PDB" id="8BEH"/>
    </source>
</evidence>
<gene>
    <name type="ordered locus">At5g47570</name>
    <name type="ORF">MNJ7.16</name>
</gene>
<feature type="transit peptide" description="Mitochondrion" evidence="2">
    <location>
        <begin position="1"/>
        <end position="29"/>
    </location>
</feature>
<feature type="chain" id="PRO_0000410998" description="NADH dehydrogenase [ubiquinone] 1 beta subcomplex subunit 8, mitochondrial">
    <location>
        <begin position="30"/>
        <end position="125"/>
    </location>
</feature>
<feature type="transmembrane region" description="Helical" evidence="2">
    <location>
        <begin position="78"/>
        <end position="98"/>
    </location>
</feature>
<feature type="turn" evidence="4">
    <location>
        <begin position="49"/>
        <end position="52"/>
    </location>
</feature>
<feature type="helix" evidence="5">
    <location>
        <begin position="75"/>
        <end position="99"/>
    </location>
</feature>
<feature type="helix" evidence="5">
    <location>
        <begin position="101"/>
        <end position="104"/>
    </location>
</feature>
<feature type="helix" evidence="5">
    <location>
        <begin position="113"/>
        <end position="117"/>
    </location>
</feature>
<feature type="turn" evidence="5">
    <location>
        <begin position="118"/>
        <end position="122"/>
    </location>
</feature>